<comment type="function">
    <text evidence="1">A helicase/nuclease that prepares dsDNA breaks (DSB) for recombinational DNA repair. Binds to DSBs and unwinds DNA via a highly rapid and processive ATP-dependent bidirectional helicase activity. Unwinds dsDNA until it encounters a Chi (crossover hotspot instigator) sequence from the 3' direction. Cuts ssDNA a few nucleotides 3' to the Chi site. The properties and activities of the enzyme are changed at Chi. The Chi-altered holoenzyme produces a long 3'-ssDNA overhang and facilitates RecA-binding to the ssDNA for homologous DNA recombination and repair. Holoenzyme degrades any linearized DNA that is unable to undergo homologous recombination. In the holoenzyme this subunit recognizes the wild-type Chi sequence, and when added to isolated RecB increases its ATP-dependent helicase processivity.</text>
</comment>
<comment type="subunit">
    <text evidence="1">Heterotrimer of RecB, RecC and RecD. All subunits contribute to DNA-binding.</text>
</comment>
<comment type="miscellaneous">
    <text evidence="1">In the RecBCD complex, RecB has a slow 3'-5' helicase, an exonuclease activity and loads RecA onto ssDNA, RecD has a fast 5'-3' helicase activity, while RecC stimulates the ATPase and processivity of the RecB helicase and contributes to recognition of the Chi site.</text>
</comment>
<comment type="similarity">
    <text evidence="1">Belongs to the RecC family.</text>
</comment>
<accession>P44945</accession>
<reference key="1">
    <citation type="journal article" date="1995" name="Science">
        <title>Whole-genome random sequencing and assembly of Haemophilus influenzae Rd.</title>
        <authorList>
            <person name="Fleischmann R.D."/>
            <person name="Adams M.D."/>
            <person name="White O."/>
            <person name="Clayton R.A."/>
            <person name="Kirkness E.F."/>
            <person name="Kerlavage A.R."/>
            <person name="Bult C.J."/>
            <person name="Tomb J.-F."/>
            <person name="Dougherty B.A."/>
            <person name="Merrick J.M."/>
            <person name="McKenney K."/>
            <person name="Sutton G.G."/>
            <person name="FitzHugh W."/>
            <person name="Fields C.A."/>
            <person name="Gocayne J.D."/>
            <person name="Scott J.D."/>
            <person name="Shirley R."/>
            <person name="Liu L.-I."/>
            <person name="Glodek A."/>
            <person name="Kelley J.M."/>
            <person name="Weidman J.F."/>
            <person name="Phillips C.A."/>
            <person name="Spriggs T."/>
            <person name="Hedblom E."/>
            <person name="Cotton M.D."/>
            <person name="Utterback T.R."/>
            <person name="Hanna M.C."/>
            <person name="Nguyen D.T."/>
            <person name="Saudek D.M."/>
            <person name="Brandon R.C."/>
            <person name="Fine L.D."/>
            <person name="Fritchman J.L."/>
            <person name="Fuhrmann J.L."/>
            <person name="Geoghagen N.S.M."/>
            <person name="Gnehm C.L."/>
            <person name="McDonald L.A."/>
            <person name="Small K.V."/>
            <person name="Fraser C.M."/>
            <person name="Smith H.O."/>
            <person name="Venter J.C."/>
        </authorList>
    </citation>
    <scope>NUCLEOTIDE SEQUENCE [LARGE SCALE GENOMIC DNA]</scope>
    <source>
        <strain>ATCC 51907 / DSM 11121 / KW20 / Rd</strain>
    </source>
</reference>
<name>RECC_HAEIN</name>
<feature type="chain" id="PRO_0000087121" description="RecBCD enzyme subunit RecC">
    <location>
        <begin position="1"/>
        <end position="1121"/>
    </location>
</feature>
<organism>
    <name type="scientific">Haemophilus influenzae (strain ATCC 51907 / DSM 11121 / KW20 / Rd)</name>
    <dbReference type="NCBI Taxonomy" id="71421"/>
    <lineage>
        <taxon>Bacteria</taxon>
        <taxon>Pseudomonadati</taxon>
        <taxon>Pseudomonadota</taxon>
        <taxon>Gammaproteobacteria</taxon>
        <taxon>Pasteurellales</taxon>
        <taxon>Pasteurellaceae</taxon>
        <taxon>Haemophilus</taxon>
    </lineage>
</organism>
<protein>
    <recommendedName>
        <fullName evidence="1">RecBCD enzyme subunit RecC</fullName>
    </recommendedName>
    <alternativeName>
        <fullName evidence="1">Exonuclease V subunit RecC</fullName>
        <shortName evidence="1">ExoV subunit RecC</shortName>
    </alternativeName>
    <alternativeName>
        <fullName evidence="1">Helicase/nuclease RecBCD subunit RecC</fullName>
    </alternativeName>
</protein>
<evidence type="ECO:0000255" key="1">
    <source>
        <dbReference type="HAMAP-Rule" id="MF_01486"/>
    </source>
</evidence>
<gene>
    <name evidence="1" type="primary">recC</name>
    <name type="ordered locus">HI_0942</name>
</gene>
<sequence>MFIVYYSNQLEKQKEILSSLFKSLPPEDPFQQDIILVQSPNMAQWLQIELAKETGISANLKFPMPASFIWQLYAQNLPATALENPFDKDSMMWRLMRLIPIFLEKENFSPLRNYLSSSPHSEQYKLYQLSSKIADLFDQYLVYRPEWIFAWEKGEDEQITDQIQKQQPNLNATLFAQIQGNTKWQGELWRALVVDVKSDVNEATHRAALHNQFLALLADKKAPKKLPSRIFIFGIPALPTAYLNILQAISSEVDIHLFFNNPCQEYWGDISDLRLDYLRSRQRYQFNKQDENQPLFSEDQLSQLENAQFDVTYQKENLQLGNPLLAAWGKMGRDFLYILVRDEEHIPTYPVNAYQEIESNSLLGQLQSQILHLENKPLNIAKNDRTLTLHSCHSAMREVEVLHDYLLDLFNQDPSLTPKDVVVMVADINQYTPYIQAVFGQKNGDVPQIPFSLSDNKLSESDVLVSSYLTLLRLKESNFSAEDVLVLLDIPAMRERFNISLADLPLVREWVTDSGIRFGLQKNQDGINFNSWQAGLERMILGYAMREEQGIWQDSLGLNSSYGLKGELAGNLSHFFTALSALHETLQQAHSIEKWQEILTALLSDFFVRNEDTSDMIFYIQEKINELAEHLKTLHFNEELQAEVIADVITMQLEDAPNSLKFLAGKVNFCTLLPMRSVPFKVVCLLGMNDADYPRTQTPNSFDLMQYHYQKGDRVRRDDDRYLFLEALLAARDYCYISYVGRSITDNQPKEPSVLVSQLLDYINQGQKENVLTVIEHPMTAFSPDNFKNNEKFTRSFATKWLPIAQFDASSNNSEFAVTMTENLEKIEEVELDALVSFVENPVKFFFEKQLGVYFRDKDERIADSENFTLSGLDNYSLNNDLIYLDEQNFADYFRQAEVKGVLPRAEFGKVYAENIRDNVLEFKKKIADLGEAKHASVDFNLSVDWQNENQKIRLFGYMDALFGDDSQVIHWHFAKYKDRYCIRPWIYYLIQCVTQENAVPAKLITQDKVLELPPIEREVALAQLQIYVKDYLQSQIEIQLVPTVRNISDFIVSDENSVSEKLQELTESNGFGPKADPYWSRVLAQTSRFKQPENIAKLLKQTKAWFGLLFAQKKTRKTQS</sequence>
<proteinExistence type="inferred from homology"/>
<dbReference type="EMBL" id="L42023">
    <property type="protein sequence ID" value="AAC22596.1"/>
    <property type="molecule type" value="Genomic_DNA"/>
</dbReference>
<dbReference type="PIR" id="G64103">
    <property type="entry name" value="G64103"/>
</dbReference>
<dbReference type="RefSeq" id="NP_439102.1">
    <property type="nucleotide sequence ID" value="NC_000907.1"/>
</dbReference>
<dbReference type="SMR" id="P44945"/>
<dbReference type="STRING" id="71421.HI_0942"/>
<dbReference type="EnsemblBacteria" id="AAC22596">
    <property type="protein sequence ID" value="AAC22596"/>
    <property type="gene ID" value="HI_0942"/>
</dbReference>
<dbReference type="KEGG" id="hin:HI_0942"/>
<dbReference type="PATRIC" id="fig|71421.8.peg.983"/>
<dbReference type="eggNOG" id="COG1330">
    <property type="taxonomic scope" value="Bacteria"/>
</dbReference>
<dbReference type="HOGENOM" id="CLU_007513_0_0_6"/>
<dbReference type="OrthoDB" id="9762834at2"/>
<dbReference type="PhylomeDB" id="P44945"/>
<dbReference type="BioCyc" id="HINF71421:G1GJ1-982-MONOMER"/>
<dbReference type="Proteomes" id="UP000000579">
    <property type="component" value="Chromosome"/>
</dbReference>
<dbReference type="GO" id="GO:0009338">
    <property type="term" value="C:exodeoxyribonuclease V complex"/>
    <property type="evidence" value="ECO:0007669"/>
    <property type="project" value="InterPro"/>
</dbReference>
<dbReference type="GO" id="GO:0005524">
    <property type="term" value="F:ATP binding"/>
    <property type="evidence" value="ECO:0007669"/>
    <property type="project" value="UniProtKB-UniRule"/>
</dbReference>
<dbReference type="GO" id="GO:0003677">
    <property type="term" value="F:DNA binding"/>
    <property type="evidence" value="ECO:0007669"/>
    <property type="project" value="UniProtKB-UniRule"/>
</dbReference>
<dbReference type="GO" id="GO:0003678">
    <property type="term" value="F:DNA helicase activity"/>
    <property type="evidence" value="ECO:0007669"/>
    <property type="project" value="UniProtKB-UniRule"/>
</dbReference>
<dbReference type="GO" id="GO:0008854">
    <property type="term" value="F:exodeoxyribonuclease V activity"/>
    <property type="evidence" value="ECO:0007669"/>
    <property type="project" value="UniProtKB-EC"/>
</dbReference>
<dbReference type="GO" id="GO:0006310">
    <property type="term" value="P:DNA recombination"/>
    <property type="evidence" value="ECO:0000318"/>
    <property type="project" value="GO_Central"/>
</dbReference>
<dbReference type="GO" id="GO:0000724">
    <property type="term" value="P:double-strand break repair via homologous recombination"/>
    <property type="evidence" value="ECO:0007669"/>
    <property type="project" value="UniProtKB-UniRule"/>
</dbReference>
<dbReference type="Gene3D" id="1.10.10.160">
    <property type="match status" value="1"/>
</dbReference>
<dbReference type="Gene3D" id="1.10.10.990">
    <property type="match status" value="1"/>
</dbReference>
<dbReference type="Gene3D" id="3.40.50.10930">
    <property type="match status" value="1"/>
</dbReference>
<dbReference type="Gene3D" id="3.40.50.300">
    <property type="entry name" value="P-loop containing nucleotide triphosphate hydrolases"/>
    <property type="match status" value="2"/>
</dbReference>
<dbReference type="HAMAP" id="MF_01486">
    <property type="entry name" value="RecC"/>
    <property type="match status" value="1"/>
</dbReference>
<dbReference type="InterPro" id="IPR013986">
    <property type="entry name" value="DExx_box_DNA_helicase_dom_sf"/>
</dbReference>
<dbReference type="InterPro" id="IPR027417">
    <property type="entry name" value="P-loop_NTPase"/>
</dbReference>
<dbReference type="InterPro" id="IPR006697">
    <property type="entry name" value="RecC"/>
</dbReference>
<dbReference type="InterPro" id="IPR041500">
    <property type="entry name" value="RecC_C"/>
</dbReference>
<dbReference type="InterPro" id="IPR011335">
    <property type="entry name" value="Restrct_endonuc-II-like"/>
</dbReference>
<dbReference type="NCBIfam" id="TIGR01450">
    <property type="entry name" value="recC"/>
    <property type="match status" value="1"/>
</dbReference>
<dbReference type="PANTHER" id="PTHR30591">
    <property type="entry name" value="RECBCD ENZYME SUBUNIT RECC"/>
    <property type="match status" value="1"/>
</dbReference>
<dbReference type="PANTHER" id="PTHR30591:SF1">
    <property type="entry name" value="RECBCD ENZYME SUBUNIT RECC"/>
    <property type="match status" value="1"/>
</dbReference>
<dbReference type="Pfam" id="PF04257">
    <property type="entry name" value="Exonuc_V_gamma"/>
    <property type="match status" value="1"/>
</dbReference>
<dbReference type="Pfam" id="PF17946">
    <property type="entry name" value="RecC_C"/>
    <property type="match status" value="1"/>
</dbReference>
<dbReference type="PIRSF" id="PIRSF000980">
    <property type="entry name" value="RecC"/>
    <property type="match status" value="1"/>
</dbReference>
<dbReference type="SUPFAM" id="SSF52540">
    <property type="entry name" value="P-loop containing nucleoside triphosphate hydrolases"/>
    <property type="match status" value="2"/>
</dbReference>
<dbReference type="SUPFAM" id="SSF52980">
    <property type="entry name" value="Restriction endonuclease-like"/>
    <property type="match status" value="1"/>
</dbReference>
<keyword id="KW-0067">ATP-binding</keyword>
<keyword id="KW-0227">DNA damage</keyword>
<keyword id="KW-0234">DNA repair</keyword>
<keyword id="KW-0238">DNA-binding</keyword>
<keyword id="KW-0269">Exonuclease</keyword>
<keyword id="KW-0347">Helicase</keyword>
<keyword id="KW-0378">Hydrolase</keyword>
<keyword id="KW-0540">Nuclease</keyword>
<keyword id="KW-0547">Nucleotide-binding</keyword>
<keyword id="KW-1185">Reference proteome</keyword>